<organism>
    <name type="scientific">Escherichia coli O45:K1 (strain S88 / ExPEC)</name>
    <dbReference type="NCBI Taxonomy" id="585035"/>
    <lineage>
        <taxon>Bacteria</taxon>
        <taxon>Pseudomonadati</taxon>
        <taxon>Pseudomonadota</taxon>
        <taxon>Gammaproteobacteria</taxon>
        <taxon>Enterobacterales</taxon>
        <taxon>Enterobacteriaceae</taxon>
        <taxon>Escherichia</taxon>
    </lineage>
</organism>
<accession>B7MIA7</accession>
<gene>
    <name evidence="1" type="primary">murI</name>
    <name type="ordered locus">ECS88_4426</name>
</gene>
<sequence length="285" mass="31160">MATKLQDGNTPCLAATPSEPRPTVLVFDSGVGGLSVYDEIRHLLPDLHYIYAFDNVAFPYGEKSEVFIVERVVEIVTAVQERYPLALAVVACNTASTVSLPALREKFDFPVVGVVPAIKPAARLTANGIVGLLATRGTVKRSYTHELIARFANECQIEMLGSAEMVELAEAKLHGEDVSLDALKRILRPWLRMKEPPDTVVLGCTHFPLLQEELLQVLPEGTRLVDSGAAIARRTAWLLEHEAPDAKSADANIAFCMAMTPEAEQLLPVLQRYGFETLEKLAVLG</sequence>
<name>MURI_ECO45</name>
<protein>
    <recommendedName>
        <fullName evidence="1">Glutamate racemase</fullName>
        <ecNumber evidence="1">5.1.1.3</ecNumber>
    </recommendedName>
</protein>
<feature type="chain" id="PRO_1000119185" description="Glutamate racemase">
    <location>
        <begin position="1"/>
        <end position="285"/>
    </location>
</feature>
<feature type="active site" description="Proton donor/acceptor" evidence="1">
    <location>
        <position position="92"/>
    </location>
</feature>
<feature type="active site" description="Proton donor/acceptor" evidence="1">
    <location>
        <position position="204"/>
    </location>
</feature>
<feature type="binding site" evidence="1">
    <location>
        <begin position="28"/>
        <end position="29"/>
    </location>
    <ligand>
        <name>substrate</name>
    </ligand>
</feature>
<feature type="binding site" evidence="1">
    <location>
        <begin position="60"/>
        <end position="61"/>
    </location>
    <ligand>
        <name>substrate</name>
    </ligand>
</feature>
<feature type="binding site" evidence="1">
    <location>
        <begin position="93"/>
        <end position="94"/>
    </location>
    <ligand>
        <name>substrate</name>
    </ligand>
</feature>
<feature type="binding site" evidence="1">
    <location>
        <begin position="205"/>
        <end position="206"/>
    </location>
    <ligand>
        <name>substrate</name>
    </ligand>
</feature>
<proteinExistence type="inferred from homology"/>
<keyword id="KW-0133">Cell shape</keyword>
<keyword id="KW-0961">Cell wall biogenesis/degradation</keyword>
<keyword id="KW-0413">Isomerase</keyword>
<keyword id="KW-0573">Peptidoglycan synthesis</keyword>
<keyword id="KW-1185">Reference proteome</keyword>
<dbReference type="EC" id="5.1.1.3" evidence="1"/>
<dbReference type="EMBL" id="CU928161">
    <property type="protein sequence ID" value="CAR05605.1"/>
    <property type="molecule type" value="Genomic_DNA"/>
</dbReference>
<dbReference type="RefSeq" id="WP_000201829.1">
    <property type="nucleotide sequence ID" value="NC_011742.1"/>
</dbReference>
<dbReference type="SMR" id="B7MIA7"/>
<dbReference type="KEGG" id="ecz:ECS88_4426"/>
<dbReference type="HOGENOM" id="CLU_052344_2_0_6"/>
<dbReference type="UniPathway" id="UPA00219"/>
<dbReference type="Proteomes" id="UP000000747">
    <property type="component" value="Chromosome"/>
</dbReference>
<dbReference type="GO" id="GO:0008881">
    <property type="term" value="F:glutamate racemase activity"/>
    <property type="evidence" value="ECO:0007669"/>
    <property type="project" value="UniProtKB-UniRule"/>
</dbReference>
<dbReference type="GO" id="GO:0071555">
    <property type="term" value="P:cell wall organization"/>
    <property type="evidence" value="ECO:0007669"/>
    <property type="project" value="UniProtKB-KW"/>
</dbReference>
<dbReference type="GO" id="GO:0009252">
    <property type="term" value="P:peptidoglycan biosynthetic process"/>
    <property type="evidence" value="ECO:0007669"/>
    <property type="project" value="UniProtKB-UniRule"/>
</dbReference>
<dbReference type="GO" id="GO:0008360">
    <property type="term" value="P:regulation of cell shape"/>
    <property type="evidence" value="ECO:0007669"/>
    <property type="project" value="UniProtKB-KW"/>
</dbReference>
<dbReference type="FunFam" id="3.40.50.1860:FF:000002">
    <property type="entry name" value="Glutamate racemase"/>
    <property type="match status" value="1"/>
</dbReference>
<dbReference type="Gene3D" id="3.40.50.1860">
    <property type="match status" value="2"/>
</dbReference>
<dbReference type="HAMAP" id="MF_00258">
    <property type="entry name" value="Glu_racemase"/>
    <property type="match status" value="1"/>
</dbReference>
<dbReference type="InterPro" id="IPR015942">
    <property type="entry name" value="Asp/Glu/hydantoin_racemase"/>
</dbReference>
<dbReference type="InterPro" id="IPR001920">
    <property type="entry name" value="Asp/Glu_race"/>
</dbReference>
<dbReference type="InterPro" id="IPR018187">
    <property type="entry name" value="Asp/Glu_racemase_AS_1"/>
</dbReference>
<dbReference type="InterPro" id="IPR033134">
    <property type="entry name" value="Asp/Glu_racemase_AS_2"/>
</dbReference>
<dbReference type="InterPro" id="IPR004391">
    <property type="entry name" value="Glu_race"/>
</dbReference>
<dbReference type="NCBIfam" id="TIGR00067">
    <property type="entry name" value="glut_race"/>
    <property type="match status" value="1"/>
</dbReference>
<dbReference type="NCBIfam" id="NF002034">
    <property type="entry name" value="PRK00865.1-1"/>
    <property type="match status" value="1"/>
</dbReference>
<dbReference type="PANTHER" id="PTHR21198">
    <property type="entry name" value="GLUTAMATE RACEMASE"/>
    <property type="match status" value="1"/>
</dbReference>
<dbReference type="PANTHER" id="PTHR21198:SF2">
    <property type="entry name" value="GLUTAMATE RACEMASE"/>
    <property type="match status" value="1"/>
</dbReference>
<dbReference type="Pfam" id="PF01177">
    <property type="entry name" value="Asp_Glu_race"/>
    <property type="match status" value="1"/>
</dbReference>
<dbReference type="SUPFAM" id="SSF53681">
    <property type="entry name" value="Aspartate/glutamate racemase"/>
    <property type="match status" value="2"/>
</dbReference>
<dbReference type="PROSITE" id="PS00923">
    <property type="entry name" value="ASP_GLU_RACEMASE_1"/>
    <property type="match status" value="1"/>
</dbReference>
<dbReference type="PROSITE" id="PS00924">
    <property type="entry name" value="ASP_GLU_RACEMASE_2"/>
    <property type="match status" value="1"/>
</dbReference>
<reference key="1">
    <citation type="journal article" date="2009" name="PLoS Genet.">
        <title>Organised genome dynamics in the Escherichia coli species results in highly diverse adaptive paths.</title>
        <authorList>
            <person name="Touchon M."/>
            <person name="Hoede C."/>
            <person name="Tenaillon O."/>
            <person name="Barbe V."/>
            <person name="Baeriswyl S."/>
            <person name="Bidet P."/>
            <person name="Bingen E."/>
            <person name="Bonacorsi S."/>
            <person name="Bouchier C."/>
            <person name="Bouvet O."/>
            <person name="Calteau A."/>
            <person name="Chiapello H."/>
            <person name="Clermont O."/>
            <person name="Cruveiller S."/>
            <person name="Danchin A."/>
            <person name="Diard M."/>
            <person name="Dossat C."/>
            <person name="Karoui M.E."/>
            <person name="Frapy E."/>
            <person name="Garry L."/>
            <person name="Ghigo J.M."/>
            <person name="Gilles A.M."/>
            <person name="Johnson J."/>
            <person name="Le Bouguenec C."/>
            <person name="Lescat M."/>
            <person name="Mangenot S."/>
            <person name="Martinez-Jehanne V."/>
            <person name="Matic I."/>
            <person name="Nassif X."/>
            <person name="Oztas S."/>
            <person name="Petit M.A."/>
            <person name="Pichon C."/>
            <person name="Rouy Z."/>
            <person name="Ruf C.S."/>
            <person name="Schneider D."/>
            <person name="Tourret J."/>
            <person name="Vacherie B."/>
            <person name="Vallenet D."/>
            <person name="Medigue C."/>
            <person name="Rocha E.P.C."/>
            <person name="Denamur E."/>
        </authorList>
    </citation>
    <scope>NUCLEOTIDE SEQUENCE [LARGE SCALE GENOMIC DNA]</scope>
    <source>
        <strain>S88 / ExPEC</strain>
    </source>
</reference>
<evidence type="ECO:0000255" key="1">
    <source>
        <dbReference type="HAMAP-Rule" id="MF_00258"/>
    </source>
</evidence>
<comment type="function">
    <text evidence="1">Provides the (R)-glutamate required for cell wall biosynthesis.</text>
</comment>
<comment type="catalytic activity">
    <reaction evidence="1">
        <text>L-glutamate = D-glutamate</text>
        <dbReference type="Rhea" id="RHEA:12813"/>
        <dbReference type="ChEBI" id="CHEBI:29985"/>
        <dbReference type="ChEBI" id="CHEBI:29986"/>
        <dbReference type="EC" id="5.1.1.3"/>
    </reaction>
</comment>
<comment type="pathway">
    <text evidence="1">Cell wall biogenesis; peptidoglycan biosynthesis.</text>
</comment>
<comment type="similarity">
    <text evidence="1">Belongs to the aspartate/glutamate racemases family.</text>
</comment>